<evidence type="ECO:0000250" key="1">
    <source>
        <dbReference type="UniProtKB" id="P9WQB5"/>
    </source>
</evidence>
<evidence type="ECO:0000269" key="2">
    <source>
    </source>
</evidence>
<evidence type="ECO:0000269" key="3">
    <source>
    </source>
</evidence>
<evidence type="ECO:0000269" key="4">
    <source>
    </source>
</evidence>
<evidence type="ECO:0000305" key="5"/>
<evidence type="ECO:0000305" key="6">
    <source>
    </source>
</evidence>
<evidence type="ECO:0000312" key="7">
    <source>
        <dbReference type="EMBL" id="CCP44935.1"/>
    </source>
</evidence>
<feature type="chain" id="PRO_0000458113" description="Alkyl hydroperoxide reductase Rv2159c">
    <location>
        <begin position="1"/>
        <end position="344"/>
    </location>
</feature>
<feature type="region of interest" description="Important for interaction with PknI" evidence="3">
    <location>
        <begin position="49"/>
        <end position="50"/>
    </location>
</feature>
<feature type="active site" description="Cysteine sulfenic acid (-SOH) intermediate" evidence="1">
    <location>
        <position position="84"/>
    </location>
</feature>
<feature type="mutagenesis site" description="Abolishes interaction with PknI." evidence="3">
    <original>A</original>
    <variation>P</variation>
    <location>
        <position position="49"/>
    </location>
</feature>
<feature type="mutagenesis site" description="Abolishes interaction with PknI." evidence="3">
    <original>G</original>
    <variation>A</variation>
    <location>
        <position position="50"/>
    </location>
</feature>
<feature type="mutagenesis site" description="Does not affect interaction with PknI." evidence="3">
    <original>W</original>
    <variation>A</variation>
    <location>
        <position position="51"/>
    </location>
</feature>
<feature type="mutagenesis site" description="No change in activity." evidence="3">
    <original>C</original>
    <variation>S</variation>
    <location>
        <position position="81"/>
    </location>
</feature>
<feature type="mutagenesis site" description="Loss of activity." evidence="3">
    <original>C</original>
    <variation>S</variation>
    <location>
        <position position="84"/>
    </location>
</feature>
<protein>
    <recommendedName>
        <fullName evidence="5">Alkyl hydroperoxide reductase Rv2159c</fullName>
        <ecNumber evidence="6">1.11.1.-</ecNumber>
    </recommendedName>
    <alternativeName>
        <fullName evidence="5">Alkylhydroperoxidase Rv2159c</fullName>
    </alternativeName>
</protein>
<keyword id="KW-0560">Oxidoreductase</keyword>
<keyword id="KW-0575">Peroxidase</keyword>
<keyword id="KW-1185">Reference proteome</keyword>
<keyword id="KW-0843">Virulence</keyword>
<accession>O06218</accession>
<accession>F2GKF8</accession>
<accession>I6Y8J4</accession>
<accession>Q7D7G1</accession>
<sequence>MKFVNHIEPVAPRRAGGAVAEVYAEARREFGRLPEPLAMLSPDEGLLTAGWATLRETLLVGQVPRGRKEAVAAAVAASLRCPWCVDAHTTMLYAAGQTDTAAAILAGTAPAAGDPNAPYVAWAAGTGTPAGPPAPFGPDVAAEYLGTAVQFHFIARLVLVLLDETFLPGGPRAQQLMRRAGGLVFARKVRAEHRPGRSTRRLEPRTLPDDLAWATPSEPIATAFAALSHHLDTAPHLPPPTRQVVRRVVGSWHGEPMPMSSRWTNEHTAELPADLHAPTRLALLTGLAPHQVTDDDVAAARSLLDTDAALVGALAWAAFTAARRIGTWIGAAAEGQVSRQNPTG</sequence>
<name>AHPR_MYCTU</name>
<proteinExistence type="evidence at protein level"/>
<comment type="function">
    <text evidence="3 4">Involved in protection against oxidative stresses (PubMed:27818650, PubMed:35745538). May play a significant role in maintaining the cellular homeostasis during stress and virulence of M.tuberculosis (PubMed:27818650, PubMed:35745538). In vitro, catalyzes the decomposition of cumene hydroperoxide (CHP) to acetophenone (PubMed:27818650).</text>
</comment>
<comment type="activity regulation">
    <text evidence="3">Interaction with PknI increases the peroxidase activity by several folds.</text>
</comment>
<comment type="subunit">
    <text evidence="2 3">Interacts with the serine/threonine-protein kinase PknI (PubMed:26546727, PubMed:27818650). The PknI-Rv2159c interaction is mediated through phosphorylation independent physical interaction (PubMed:27818650).</text>
</comment>
<comment type="disruption phenotype">
    <text evidence="3 4">Disruption mutant is sensitive to oxidative stress and exposure to toxic transition metals (PubMed:35745538). In a human monocyte (THP-1) cell infection model, mutant shows reduced uptake and intracellular survival and increased expression of pro-inflammatory molecules, including IL-1 beta, IP-10, and MIP-1 alpha (PubMed:35745538). In a guinea pig model of pulmonary infection, mutant displays growth attenuation in the lungs (PubMed:35745538). Knockdown of the gene leads to increased sensitivity to peroxides such as cumene hydroperoxide and hydrogen peroxide (PubMed:27818650).</text>
</comment>
<comment type="miscellaneous">
    <text evidence="3">Though the Rv2159c protein is a peroxidase, it does not form disulfide bridges between the two catalytic site cysteines.</text>
</comment>
<comment type="similarity">
    <text evidence="5">Belongs to the AhpD family.</text>
</comment>
<reference key="1">
    <citation type="journal article" date="1998" name="Nature">
        <title>Deciphering the biology of Mycobacterium tuberculosis from the complete genome sequence.</title>
        <authorList>
            <person name="Cole S.T."/>
            <person name="Brosch R."/>
            <person name="Parkhill J."/>
            <person name="Garnier T."/>
            <person name="Churcher C.M."/>
            <person name="Harris D.E."/>
            <person name="Gordon S.V."/>
            <person name="Eiglmeier K."/>
            <person name="Gas S."/>
            <person name="Barry C.E. III"/>
            <person name="Tekaia F."/>
            <person name="Badcock K."/>
            <person name="Basham D."/>
            <person name="Brown D."/>
            <person name="Chillingworth T."/>
            <person name="Connor R."/>
            <person name="Davies R.M."/>
            <person name="Devlin K."/>
            <person name="Feltwell T."/>
            <person name="Gentles S."/>
            <person name="Hamlin N."/>
            <person name="Holroyd S."/>
            <person name="Hornsby T."/>
            <person name="Jagels K."/>
            <person name="Krogh A."/>
            <person name="McLean J."/>
            <person name="Moule S."/>
            <person name="Murphy L.D."/>
            <person name="Oliver S."/>
            <person name="Osborne J."/>
            <person name="Quail M.A."/>
            <person name="Rajandream M.A."/>
            <person name="Rogers J."/>
            <person name="Rutter S."/>
            <person name="Seeger K."/>
            <person name="Skelton S."/>
            <person name="Squares S."/>
            <person name="Squares R."/>
            <person name="Sulston J.E."/>
            <person name="Taylor K."/>
            <person name="Whitehead S."/>
            <person name="Barrell B.G."/>
        </authorList>
    </citation>
    <scope>NUCLEOTIDE SEQUENCE [LARGE SCALE GENOMIC DNA]</scope>
    <source>
        <strain>ATCC 25618 / H37Rv</strain>
    </source>
</reference>
<reference key="2">
    <citation type="journal article" date="2011" name="Mol. Cell. Proteomics">
        <title>Proteogenomic analysis of Mycobacterium tuberculosis by high resolution mass spectrometry.</title>
        <authorList>
            <person name="Kelkar D.S."/>
            <person name="Kumar D."/>
            <person name="Kumar P."/>
            <person name="Balakrishnan L."/>
            <person name="Muthusamy B."/>
            <person name="Yadav A.K."/>
            <person name="Shrivastava P."/>
            <person name="Marimuthu A."/>
            <person name="Anand S."/>
            <person name="Sundaram H."/>
            <person name="Kingsbury R."/>
            <person name="Harsha H.C."/>
            <person name="Nair B."/>
            <person name="Prasad T.S."/>
            <person name="Chauhan D.S."/>
            <person name="Katoch K."/>
            <person name="Katoch V.M."/>
            <person name="Kumar P."/>
            <person name="Chaerkady R."/>
            <person name="Ramachandran S."/>
            <person name="Dash D."/>
            <person name="Pandey A."/>
        </authorList>
    </citation>
    <scope>IDENTIFICATION BY MASS SPECTROMETRY [LARGE SCALE ANALYSIS]</scope>
    <source>
        <strain>ATCC 25618 / H37Rv</strain>
    </source>
</reference>
<reference key="3">
    <citation type="journal article" date="2015" name="J. Mol. Graph. Model.">
        <title>In silico and experimental validation of protein-protein interactions between PknI and Rv2159c from Mycobacterium tuberculosis.</title>
        <authorList>
            <person name="Venkatesan A."/>
            <person name="Hassan S."/>
            <person name="Palaniyandi K."/>
            <person name="Narayanan S."/>
        </authorList>
    </citation>
    <scope>IDENTIFICATION BY MASS SPECTROMETRY</scope>
    <scope>INTERACTION WITH PKNI</scope>
    <scope>HOMOLOGY MODELING</scope>
    <scope>MOLECULAR DYNAMICS SIMULATION</scope>
    <source>
        <strain>H37Rv</strain>
    </source>
</reference>
<reference key="4">
    <citation type="journal article" date="2016" name="Front. Microbiol.">
        <title>Functional characterization of PknI-Rv2159c interaction in redox homeostasis of Mycobacterium tuberculosis.</title>
        <authorList>
            <person name="Venkatesan A."/>
            <person name="Palaniyandi K."/>
            <person name="Sharma D."/>
            <person name="Bisht D."/>
            <person name="Narayanan S."/>
        </authorList>
    </citation>
    <scope>FUNCTION</scope>
    <scope>ACTIVITY REGULATION</scope>
    <scope>INTERACTION WITH PKNI</scope>
    <scope>DISRUPTION PHENOTYPE</scope>
    <scope>MUTAGENESIS OF ALA-49; GLY-50; TRP-51; CYS-81 AND CYS-84</scope>
    <source>
        <strain>H37Rv</strain>
    </source>
</reference>
<reference key="5">
    <citation type="journal article" date="2022" name="Pathogens">
        <title>Role of a putative alkylhydroperoxidase Rv2159c in the oxidative stress response and virulence of Mycobacterium tuberculosis.</title>
        <authorList>
            <person name="Bhargavi G."/>
            <person name="Singh A.K."/>
            <person name="Deenadayalan A."/>
            <person name="Ponnuraja C."/>
            <person name="Patil S.A."/>
            <person name="Palaniyandi K."/>
        </authorList>
    </citation>
    <scope>FUNCTION</scope>
    <scope>DISRUPTION PHENOTYPE</scope>
</reference>
<dbReference type="EC" id="1.11.1.-" evidence="6"/>
<dbReference type="EMBL" id="AL123456">
    <property type="protein sequence ID" value="CCP44935.1"/>
    <property type="molecule type" value="Genomic_DNA"/>
</dbReference>
<dbReference type="RefSeq" id="NP_216675.1">
    <property type="nucleotide sequence ID" value="NC_000962.3"/>
</dbReference>
<dbReference type="RefSeq" id="WP_003899194.1">
    <property type="nucleotide sequence ID" value="NZ_NVQJ01000044.1"/>
</dbReference>
<dbReference type="SMR" id="O06218"/>
<dbReference type="STRING" id="83332.Rv2159c"/>
<dbReference type="PeroxiBase" id="4597">
    <property type="entry name" value="MtuCMD"/>
</dbReference>
<dbReference type="PaxDb" id="83332-Rv2159c"/>
<dbReference type="DNASU" id="887236"/>
<dbReference type="GeneID" id="887236"/>
<dbReference type="KEGG" id="mtu:Rv2159c"/>
<dbReference type="KEGG" id="mtv:RVBD_2159c"/>
<dbReference type="PATRIC" id="fig|83332.111.peg.2405"/>
<dbReference type="TubercuList" id="Rv2159c"/>
<dbReference type="eggNOG" id="COG2128">
    <property type="taxonomic scope" value="Bacteria"/>
</dbReference>
<dbReference type="InParanoid" id="O06218"/>
<dbReference type="OrthoDB" id="3342615at2"/>
<dbReference type="PHI-base" id="PHI:123190"/>
<dbReference type="Proteomes" id="UP000001584">
    <property type="component" value="Chromosome"/>
</dbReference>
<dbReference type="GO" id="GO:0009274">
    <property type="term" value="C:peptidoglycan-based cell wall"/>
    <property type="evidence" value="ECO:0007005"/>
    <property type="project" value="MTBBASE"/>
</dbReference>
<dbReference type="GO" id="GO:0005886">
    <property type="term" value="C:plasma membrane"/>
    <property type="evidence" value="ECO:0007005"/>
    <property type="project" value="MTBBASE"/>
</dbReference>
<dbReference type="GO" id="GO:0051920">
    <property type="term" value="F:peroxiredoxin activity"/>
    <property type="evidence" value="ECO:0007669"/>
    <property type="project" value="InterPro"/>
</dbReference>
<dbReference type="Gene3D" id="1.20.1290.10">
    <property type="entry name" value="AhpD-like"/>
    <property type="match status" value="1"/>
</dbReference>
<dbReference type="InterPro" id="IPR029032">
    <property type="entry name" value="AhpD-like"/>
</dbReference>
<dbReference type="InterPro" id="IPR004675">
    <property type="entry name" value="AhpD_core"/>
</dbReference>
<dbReference type="InterPro" id="IPR003779">
    <property type="entry name" value="CMD-like"/>
</dbReference>
<dbReference type="NCBIfam" id="TIGR00778">
    <property type="entry name" value="ahpD_dom"/>
    <property type="match status" value="1"/>
</dbReference>
<dbReference type="Pfam" id="PF02627">
    <property type="entry name" value="CMD"/>
    <property type="match status" value="1"/>
</dbReference>
<dbReference type="SUPFAM" id="SSF69118">
    <property type="entry name" value="AhpD-like"/>
    <property type="match status" value="2"/>
</dbReference>
<gene>
    <name evidence="7" type="ordered locus">Rv2159c</name>
</gene>
<organism>
    <name type="scientific">Mycobacterium tuberculosis (strain ATCC 25618 / H37Rv)</name>
    <dbReference type="NCBI Taxonomy" id="83332"/>
    <lineage>
        <taxon>Bacteria</taxon>
        <taxon>Bacillati</taxon>
        <taxon>Actinomycetota</taxon>
        <taxon>Actinomycetes</taxon>
        <taxon>Mycobacteriales</taxon>
        <taxon>Mycobacteriaceae</taxon>
        <taxon>Mycobacterium</taxon>
        <taxon>Mycobacterium tuberculosis complex</taxon>
    </lineage>
</organism>